<feature type="chain" id="PRO_0000153358" description="Histidinol-phosphate aminotransferase">
    <location>
        <begin position="1"/>
        <end position="373"/>
    </location>
</feature>
<feature type="modified residue" description="N6-(pyridoxal phosphate)lysine" evidence="1">
    <location>
        <position position="233"/>
    </location>
</feature>
<protein>
    <recommendedName>
        <fullName evidence="1">Histidinol-phosphate aminotransferase</fullName>
        <ecNumber evidence="1">2.6.1.9</ecNumber>
    </recommendedName>
    <alternativeName>
        <fullName evidence="1">Imidazole acetol-phosphate transaminase</fullName>
    </alternativeName>
</protein>
<name>HIS8_NITV2</name>
<sequence length="373" mass="41268">MTAPSMSRPDDVRPEVLDFKPYVPGLSIDEIRDRFGLADVVKLASNENPLGTSPVVQRTLKTKADLAFRYAQSGNPRLTRAIAAHHGVAPERVVAGNGSDEIIDLLIRVRATPGKHNIVAFRPCFSIYELQAKFCGLEFRQADLRPDFTFDWDAFLAATDENTAIAFVTTPDNPSGWCPPVSELEHVARTLPPSCLFVIDEAYMDFCGDEAAHSLLSRLDAFPNIAVLRTFSKSFGLAGLRLGYGILPERLADYLHRVRLPFSVNILAEEAGLAALEDTVFRSETLRVTAEGRAYIAEGLTALGCEVMPSWANFIMFRPPTDATDLFEALLRRGIIIRPLKSYGLPQHLRVSVGNADENRRFIEACKEILPHA</sequence>
<gene>
    <name evidence="1" type="primary">hisC</name>
    <name type="ordered locus">DVU_1029</name>
</gene>
<evidence type="ECO:0000255" key="1">
    <source>
        <dbReference type="HAMAP-Rule" id="MF_01023"/>
    </source>
</evidence>
<reference key="1">
    <citation type="journal article" date="2004" name="Nat. Biotechnol.">
        <title>The genome sequence of the anaerobic, sulfate-reducing bacterium Desulfovibrio vulgaris Hildenborough.</title>
        <authorList>
            <person name="Heidelberg J.F."/>
            <person name="Seshadri R."/>
            <person name="Haveman S.A."/>
            <person name="Hemme C.L."/>
            <person name="Paulsen I.T."/>
            <person name="Kolonay J.F."/>
            <person name="Eisen J.A."/>
            <person name="Ward N.L."/>
            <person name="Methe B.A."/>
            <person name="Brinkac L.M."/>
            <person name="Daugherty S.C."/>
            <person name="DeBoy R.T."/>
            <person name="Dodson R.J."/>
            <person name="Durkin A.S."/>
            <person name="Madupu R."/>
            <person name="Nelson W.C."/>
            <person name="Sullivan S.A."/>
            <person name="Fouts D.E."/>
            <person name="Haft D.H."/>
            <person name="Selengut J."/>
            <person name="Peterson J.D."/>
            <person name="Davidsen T.M."/>
            <person name="Zafar N."/>
            <person name="Zhou L."/>
            <person name="Radune D."/>
            <person name="Dimitrov G."/>
            <person name="Hance M."/>
            <person name="Tran K."/>
            <person name="Khouri H.M."/>
            <person name="Gill J."/>
            <person name="Utterback T.R."/>
            <person name="Feldblyum T.V."/>
            <person name="Wall J.D."/>
            <person name="Voordouw G."/>
            <person name="Fraser C.M."/>
        </authorList>
    </citation>
    <scope>NUCLEOTIDE SEQUENCE [LARGE SCALE GENOMIC DNA]</scope>
    <source>
        <strain>ATCC 29579 / DSM 644 / CCUG 34227 / NCIMB 8303 / VKM B-1760 / Hildenborough</strain>
    </source>
</reference>
<accession>Q72DA0</accession>
<dbReference type="EC" id="2.6.1.9" evidence="1"/>
<dbReference type="EMBL" id="AE017285">
    <property type="protein sequence ID" value="AAS95509.1"/>
    <property type="molecule type" value="Genomic_DNA"/>
</dbReference>
<dbReference type="RefSeq" id="WP_010938328.1">
    <property type="nucleotide sequence ID" value="NC_002937.3"/>
</dbReference>
<dbReference type="RefSeq" id="YP_010250.1">
    <property type="nucleotide sequence ID" value="NC_002937.3"/>
</dbReference>
<dbReference type="SMR" id="Q72DA0"/>
<dbReference type="IntAct" id="Q72DA0">
    <property type="interactions" value="3"/>
</dbReference>
<dbReference type="STRING" id="882.DVU_1029"/>
<dbReference type="PaxDb" id="882-DVU_1029"/>
<dbReference type="EnsemblBacteria" id="AAS95509">
    <property type="protein sequence ID" value="AAS95509"/>
    <property type="gene ID" value="DVU_1029"/>
</dbReference>
<dbReference type="KEGG" id="dvu:DVU_1029"/>
<dbReference type="PATRIC" id="fig|882.5.peg.967"/>
<dbReference type="eggNOG" id="COG0079">
    <property type="taxonomic scope" value="Bacteria"/>
</dbReference>
<dbReference type="HOGENOM" id="CLU_017584_3_3_7"/>
<dbReference type="OrthoDB" id="9813612at2"/>
<dbReference type="PhylomeDB" id="Q72DA0"/>
<dbReference type="UniPathway" id="UPA00031">
    <property type="reaction ID" value="UER00012"/>
</dbReference>
<dbReference type="Proteomes" id="UP000002194">
    <property type="component" value="Chromosome"/>
</dbReference>
<dbReference type="GO" id="GO:0004400">
    <property type="term" value="F:histidinol-phosphate transaminase activity"/>
    <property type="evidence" value="ECO:0007669"/>
    <property type="project" value="UniProtKB-UniRule"/>
</dbReference>
<dbReference type="GO" id="GO:0030170">
    <property type="term" value="F:pyridoxal phosphate binding"/>
    <property type="evidence" value="ECO:0007669"/>
    <property type="project" value="InterPro"/>
</dbReference>
<dbReference type="GO" id="GO:0000105">
    <property type="term" value="P:L-histidine biosynthetic process"/>
    <property type="evidence" value="ECO:0007669"/>
    <property type="project" value="UniProtKB-UniRule"/>
</dbReference>
<dbReference type="CDD" id="cd00609">
    <property type="entry name" value="AAT_like"/>
    <property type="match status" value="1"/>
</dbReference>
<dbReference type="Gene3D" id="3.90.1150.10">
    <property type="entry name" value="Aspartate Aminotransferase, domain 1"/>
    <property type="match status" value="1"/>
</dbReference>
<dbReference type="Gene3D" id="3.40.640.10">
    <property type="entry name" value="Type I PLP-dependent aspartate aminotransferase-like (Major domain)"/>
    <property type="match status" value="1"/>
</dbReference>
<dbReference type="HAMAP" id="MF_01023">
    <property type="entry name" value="HisC_aminotrans_2"/>
    <property type="match status" value="1"/>
</dbReference>
<dbReference type="InterPro" id="IPR001917">
    <property type="entry name" value="Aminotrans_II_pyridoxalP_BS"/>
</dbReference>
<dbReference type="InterPro" id="IPR004839">
    <property type="entry name" value="Aminotransferase_I/II_large"/>
</dbReference>
<dbReference type="InterPro" id="IPR005861">
    <property type="entry name" value="HisP_aminotrans"/>
</dbReference>
<dbReference type="InterPro" id="IPR050106">
    <property type="entry name" value="HistidinolP_aminotransfase"/>
</dbReference>
<dbReference type="InterPro" id="IPR015424">
    <property type="entry name" value="PyrdxlP-dep_Trfase"/>
</dbReference>
<dbReference type="InterPro" id="IPR015421">
    <property type="entry name" value="PyrdxlP-dep_Trfase_major"/>
</dbReference>
<dbReference type="InterPro" id="IPR015422">
    <property type="entry name" value="PyrdxlP-dep_Trfase_small"/>
</dbReference>
<dbReference type="NCBIfam" id="TIGR01141">
    <property type="entry name" value="hisC"/>
    <property type="match status" value="1"/>
</dbReference>
<dbReference type="PANTHER" id="PTHR43643:SF3">
    <property type="entry name" value="HISTIDINOL-PHOSPHATE AMINOTRANSFERASE"/>
    <property type="match status" value="1"/>
</dbReference>
<dbReference type="PANTHER" id="PTHR43643">
    <property type="entry name" value="HISTIDINOL-PHOSPHATE AMINOTRANSFERASE 2"/>
    <property type="match status" value="1"/>
</dbReference>
<dbReference type="Pfam" id="PF00155">
    <property type="entry name" value="Aminotran_1_2"/>
    <property type="match status" value="1"/>
</dbReference>
<dbReference type="SUPFAM" id="SSF53383">
    <property type="entry name" value="PLP-dependent transferases"/>
    <property type="match status" value="1"/>
</dbReference>
<dbReference type="PROSITE" id="PS00599">
    <property type="entry name" value="AA_TRANSFER_CLASS_2"/>
    <property type="match status" value="1"/>
</dbReference>
<comment type="catalytic activity">
    <reaction evidence="1">
        <text>L-histidinol phosphate + 2-oxoglutarate = 3-(imidazol-4-yl)-2-oxopropyl phosphate + L-glutamate</text>
        <dbReference type="Rhea" id="RHEA:23744"/>
        <dbReference type="ChEBI" id="CHEBI:16810"/>
        <dbReference type="ChEBI" id="CHEBI:29985"/>
        <dbReference type="ChEBI" id="CHEBI:57766"/>
        <dbReference type="ChEBI" id="CHEBI:57980"/>
        <dbReference type="EC" id="2.6.1.9"/>
    </reaction>
</comment>
<comment type="cofactor">
    <cofactor evidence="1">
        <name>pyridoxal 5'-phosphate</name>
        <dbReference type="ChEBI" id="CHEBI:597326"/>
    </cofactor>
</comment>
<comment type="pathway">
    <text evidence="1">Amino-acid biosynthesis; L-histidine biosynthesis; L-histidine from 5-phospho-alpha-D-ribose 1-diphosphate: step 7/9.</text>
</comment>
<comment type="subunit">
    <text evidence="1">Homodimer.</text>
</comment>
<comment type="interaction">
    <interactant intactId="EBI-10068791">
        <id>Q72DA0</id>
    </interactant>
    <interactant intactId="EBI-10068795">
        <id>Q72BI4</id>
        <label>DVU_1652</label>
    </interactant>
    <organismsDiffer>false</organismsDiffer>
    <experiments>2</experiments>
</comment>
<comment type="similarity">
    <text evidence="1">Belongs to the class-II pyridoxal-phosphate-dependent aminotransferase family. Histidinol-phosphate aminotransferase subfamily.</text>
</comment>
<keyword id="KW-0028">Amino-acid biosynthesis</keyword>
<keyword id="KW-0032">Aminotransferase</keyword>
<keyword id="KW-0368">Histidine biosynthesis</keyword>
<keyword id="KW-0663">Pyridoxal phosphate</keyword>
<keyword id="KW-1185">Reference proteome</keyword>
<keyword id="KW-0808">Transferase</keyword>
<proteinExistence type="evidence at protein level"/>
<organism>
    <name type="scientific">Nitratidesulfovibrio vulgaris (strain ATCC 29579 / DSM 644 / CCUG 34227 / NCIMB 8303 / VKM B-1760 / Hildenborough)</name>
    <name type="common">Desulfovibrio vulgaris</name>
    <dbReference type="NCBI Taxonomy" id="882"/>
    <lineage>
        <taxon>Bacteria</taxon>
        <taxon>Pseudomonadati</taxon>
        <taxon>Thermodesulfobacteriota</taxon>
        <taxon>Desulfovibrionia</taxon>
        <taxon>Desulfovibrionales</taxon>
        <taxon>Desulfovibrionaceae</taxon>
        <taxon>Nitratidesulfovibrio</taxon>
    </lineage>
</organism>